<evidence type="ECO:0000250" key="1"/>
<evidence type="ECO:0000250" key="2">
    <source>
        <dbReference type="UniProtKB" id="P36405"/>
    </source>
</evidence>
<evidence type="ECO:0000250" key="3">
    <source>
        <dbReference type="UniProtKB" id="Q9WUL7"/>
    </source>
</evidence>
<evidence type="ECO:0000255" key="4"/>
<evidence type="ECO:0000305" key="5"/>
<accession>Q2TBW6</accession>
<protein>
    <recommendedName>
        <fullName>ADP-ribosylation factor-like protein 3</fullName>
    </recommendedName>
</protein>
<organism>
    <name type="scientific">Bos taurus</name>
    <name type="common">Bovine</name>
    <dbReference type="NCBI Taxonomy" id="9913"/>
    <lineage>
        <taxon>Eukaryota</taxon>
        <taxon>Metazoa</taxon>
        <taxon>Chordata</taxon>
        <taxon>Craniata</taxon>
        <taxon>Vertebrata</taxon>
        <taxon>Euteleostomi</taxon>
        <taxon>Mammalia</taxon>
        <taxon>Eutheria</taxon>
        <taxon>Laurasiatheria</taxon>
        <taxon>Artiodactyla</taxon>
        <taxon>Ruminantia</taxon>
        <taxon>Pecora</taxon>
        <taxon>Bovidae</taxon>
        <taxon>Bovinae</taxon>
        <taxon>Bos</taxon>
    </lineage>
</organism>
<keyword id="KW-0131">Cell cycle</keyword>
<keyword id="KW-0132">Cell division</keyword>
<keyword id="KW-0966">Cell projection</keyword>
<keyword id="KW-0963">Cytoplasm</keyword>
<keyword id="KW-0206">Cytoskeleton</keyword>
<keyword id="KW-0333">Golgi apparatus</keyword>
<keyword id="KW-0342">GTP-binding</keyword>
<keyword id="KW-0449">Lipoprotein</keyword>
<keyword id="KW-0460">Magnesium</keyword>
<keyword id="KW-0472">Membrane</keyword>
<keyword id="KW-0479">Metal-binding</keyword>
<keyword id="KW-0519">Myristate</keyword>
<keyword id="KW-0547">Nucleotide-binding</keyword>
<keyword id="KW-0539">Nucleus</keyword>
<keyword id="KW-0597">Phosphoprotein</keyword>
<keyword id="KW-0653">Protein transport</keyword>
<keyword id="KW-1185">Reference proteome</keyword>
<keyword id="KW-0813">Transport</keyword>
<feature type="initiator methionine" description="Removed" evidence="4">
    <location>
        <position position="1"/>
    </location>
</feature>
<feature type="chain" id="PRO_0000245354" description="ADP-ribosylation factor-like protein 3">
    <location>
        <begin position="2"/>
        <end position="182"/>
    </location>
</feature>
<feature type="binding site" evidence="1">
    <location>
        <begin position="24"/>
        <end position="31"/>
    </location>
    <ligand>
        <name>GTP</name>
        <dbReference type="ChEBI" id="CHEBI:37565"/>
    </ligand>
</feature>
<feature type="binding site" evidence="1">
    <location>
        <position position="31"/>
    </location>
    <ligand>
        <name>Mg(2+)</name>
        <dbReference type="ChEBI" id="CHEBI:18420"/>
    </ligand>
</feature>
<feature type="binding site" evidence="1">
    <location>
        <position position="48"/>
    </location>
    <ligand>
        <name>GTP</name>
        <dbReference type="ChEBI" id="CHEBI:37565"/>
    </ligand>
</feature>
<feature type="binding site" evidence="1">
    <location>
        <position position="48"/>
    </location>
    <ligand>
        <name>Mg(2+)</name>
        <dbReference type="ChEBI" id="CHEBI:18420"/>
    </ligand>
</feature>
<feature type="binding site" evidence="1">
    <location>
        <begin position="67"/>
        <end position="71"/>
    </location>
    <ligand>
        <name>GTP</name>
        <dbReference type="ChEBI" id="CHEBI:37565"/>
    </ligand>
</feature>
<feature type="binding site" evidence="1">
    <location>
        <position position="70"/>
    </location>
    <ligand>
        <name>GTP</name>
        <dbReference type="ChEBI" id="CHEBI:37565"/>
    </ligand>
</feature>
<feature type="binding site" evidence="1">
    <location>
        <begin position="126"/>
        <end position="129"/>
    </location>
    <ligand>
        <name>GTP</name>
        <dbReference type="ChEBI" id="CHEBI:37565"/>
    </ligand>
</feature>
<feature type="binding site" evidence="1">
    <location>
        <begin position="159"/>
        <end position="161"/>
    </location>
    <ligand>
        <name>GTP</name>
        <dbReference type="ChEBI" id="CHEBI:37565"/>
    </ligand>
</feature>
<feature type="modified residue" description="Phosphoserine" evidence="2">
    <location>
        <position position="5"/>
    </location>
</feature>
<feature type="lipid moiety-binding region" description="N-myristoyl glycine" evidence="4">
    <location>
        <position position="2"/>
    </location>
</feature>
<name>ARL3_BOVIN</name>
<proteinExistence type="evidence at transcript level"/>
<dbReference type="EMBL" id="BC109565">
    <property type="protein sequence ID" value="AAI09566.1"/>
    <property type="molecule type" value="mRNA"/>
</dbReference>
<dbReference type="RefSeq" id="NP_001033656.1">
    <property type="nucleotide sequence ID" value="NM_001038567.2"/>
</dbReference>
<dbReference type="SMR" id="Q2TBW6"/>
<dbReference type="FunCoup" id="Q2TBW6">
    <property type="interactions" value="955"/>
</dbReference>
<dbReference type="STRING" id="9913.ENSBTAP00000005655"/>
<dbReference type="PaxDb" id="9913-ENSBTAP00000005655"/>
<dbReference type="Ensembl" id="ENSBTAT00000005655.7">
    <property type="protein sequence ID" value="ENSBTAP00000005655.7"/>
    <property type="gene ID" value="ENSBTAG00000004318.7"/>
</dbReference>
<dbReference type="GeneID" id="540040"/>
<dbReference type="KEGG" id="bta:540040"/>
<dbReference type="CTD" id="403"/>
<dbReference type="VGNC" id="VGNC:26143">
    <property type="gene designation" value="ARL3"/>
</dbReference>
<dbReference type="eggNOG" id="KOG0074">
    <property type="taxonomic scope" value="Eukaryota"/>
</dbReference>
<dbReference type="GeneTree" id="ENSGT00940000155737"/>
<dbReference type="HOGENOM" id="CLU_040729_12_0_1"/>
<dbReference type="InParanoid" id="Q2TBW6"/>
<dbReference type="OrthoDB" id="2011769at2759"/>
<dbReference type="Proteomes" id="UP000009136">
    <property type="component" value="Chromosome 26"/>
</dbReference>
<dbReference type="GO" id="GO:0005813">
    <property type="term" value="C:centrosome"/>
    <property type="evidence" value="ECO:0000250"/>
    <property type="project" value="UniProtKB"/>
</dbReference>
<dbReference type="GO" id="GO:0005929">
    <property type="term" value="C:cilium"/>
    <property type="evidence" value="ECO:0000250"/>
    <property type="project" value="UniProtKB"/>
</dbReference>
<dbReference type="GO" id="GO:0005737">
    <property type="term" value="C:cytoplasm"/>
    <property type="evidence" value="ECO:0000318"/>
    <property type="project" value="GO_Central"/>
</dbReference>
<dbReference type="GO" id="GO:0005881">
    <property type="term" value="C:cytoplasmic microtubule"/>
    <property type="evidence" value="ECO:0000250"/>
    <property type="project" value="UniProtKB"/>
</dbReference>
<dbReference type="GO" id="GO:0005794">
    <property type="term" value="C:Golgi apparatus"/>
    <property type="evidence" value="ECO:0000250"/>
    <property type="project" value="UniProtKB"/>
</dbReference>
<dbReference type="GO" id="GO:0000139">
    <property type="term" value="C:Golgi membrane"/>
    <property type="evidence" value="ECO:0007669"/>
    <property type="project" value="UniProtKB-SubCell"/>
</dbReference>
<dbReference type="GO" id="GO:0015630">
    <property type="term" value="C:microtubule cytoskeleton"/>
    <property type="evidence" value="ECO:0000318"/>
    <property type="project" value="GO_Central"/>
</dbReference>
<dbReference type="GO" id="GO:0030496">
    <property type="term" value="C:midbody"/>
    <property type="evidence" value="ECO:0000250"/>
    <property type="project" value="UniProtKB"/>
</dbReference>
<dbReference type="GO" id="GO:0005634">
    <property type="term" value="C:nucleus"/>
    <property type="evidence" value="ECO:0000250"/>
    <property type="project" value="UniProtKB"/>
</dbReference>
<dbReference type="GO" id="GO:0032391">
    <property type="term" value="C:photoreceptor connecting cilium"/>
    <property type="evidence" value="ECO:0000250"/>
    <property type="project" value="UniProtKB"/>
</dbReference>
<dbReference type="GO" id="GO:0005876">
    <property type="term" value="C:spindle microtubule"/>
    <property type="evidence" value="ECO:0000250"/>
    <property type="project" value="UniProtKB"/>
</dbReference>
<dbReference type="GO" id="GO:0019003">
    <property type="term" value="F:GDP binding"/>
    <property type="evidence" value="ECO:0000250"/>
    <property type="project" value="UniProtKB"/>
</dbReference>
<dbReference type="GO" id="GO:0005525">
    <property type="term" value="F:GTP binding"/>
    <property type="evidence" value="ECO:0000250"/>
    <property type="project" value="UniProtKB"/>
</dbReference>
<dbReference type="GO" id="GO:0003924">
    <property type="term" value="F:GTPase activity"/>
    <property type="evidence" value="ECO:0000250"/>
    <property type="project" value="UniProtKB"/>
</dbReference>
<dbReference type="GO" id="GO:0046872">
    <property type="term" value="F:metal ion binding"/>
    <property type="evidence" value="ECO:0007669"/>
    <property type="project" value="UniProtKB-KW"/>
</dbReference>
<dbReference type="GO" id="GO:0008017">
    <property type="term" value="F:microtubule binding"/>
    <property type="evidence" value="ECO:0000250"/>
    <property type="project" value="UniProtKB"/>
</dbReference>
<dbReference type="GO" id="GO:0060271">
    <property type="term" value="P:cilium assembly"/>
    <property type="evidence" value="ECO:0000250"/>
    <property type="project" value="UniProtKB"/>
</dbReference>
<dbReference type="GO" id="GO:0006893">
    <property type="term" value="P:Golgi to plasma membrane transport"/>
    <property type="evidence" value="ECO:0000250"/>
    <property type="project" value="UniProtKB"/>
</dbReference>
<dbReference type="GO" id="GO:0001822">
    <property type="term" value="P:kidney development"/>
    <property type="evidence" value="ECO:0000250"/>
    <property type="project" value="UniProtKB"/>
</dbReference>
<dbReference type="GO" id="GO:0000281">
    <property type="term" value="P:mitotic cytokinesis"/>
    <property type="evidence" value="ECO:0000250"/>
    <property type="project" value="UniProtKB"/>
</dbReference>
<dbReference type="GO" id="GO:0042461">
    <property type="term" value="P:photoreceptor cell development"/>
    <property type="evidence" value="ECO:0000250"/>
    <property type="project" value="UniProtKB"/>
</dbReference>
<dbReference type="GO" id="GO:1903441">
    <property type="term" value="P:protein localization to ciliary membrane"/>
    <property type="evidence" value="ECO:0000250"/>
    <property type="project" value="UniProtKB"/>
</dbReference>
<dbReference type="GO" id="GO:0015031">
    <property type="term" value="P:protein transport"/>
    <property type="evidence" value="ECO:0007669"/>
    <property type="project" value="UniProtKB-KW"/>
</dbReference>
<dbReference type="GO" id="GO:0007264">
    <property type="term" value="P:small GTPase-mediated signal transduction"/>
    <property type="evidence" value="ECO:0000250"/>
    <property type="project" value="UniProtKB"/>
</dbReference>
<dbReference type="CDD" id="cd04155">
    <property type="entry name" value="Arl3"/>
    <property type="match status" value="1"/>
</dbReference>
<dbReference type="FunFam" id="3.40.50.300:FF:000281">
    <property type="entry name" value="ADP-ribosylation factor-like protein 3"/>
    <property type="match status" value="1"/>
</dbReference>
<dbReference type="Gene3D" id="3.40.50.300">
    <property type="entry name" value="P-loop containing nucleotide triphosphate hydrolases"/>
    <property type="match status" value="1"/>
</dbReference>
<dbReference type="InterPro" id="IPR044612">
    <property type="entry name" value="ARL2/3"/>
</dbReference>
<dbReference type="InterPro" id="IPR027417">
    <property type="entry name" value="P-loop_NTPase"/>
</dbReference>
<dbReference type="InterPro" id="IPR005225">
    <property type="entry name" value="Small_GTP-bd"/>
</dbReference>
<dbReference type="InterPro" id="IPR006689">
    <property type="entry name" value="Small_GTPase_ARF/SAR"/>
</dbReference>
<dbReference type="NCBIfam" id="TIGR00231">
    <property type="entry name" value="small_GTP"/>
    <property type="match status" value="1"/>
</dbReference>
<dbReference type="PANTHER" id="PTHR45697">
    <property type="entry name" value="ADP-RIBOSYLATION FACTOR-LIKE PROTEIN 2-RELATED"/>
    <property type="match status" value="1"/>
</dbReference>
<dbReference type="Pfam" id="PF00025">
    <property type="entry name" value="Arf"/>
    <property type="match status" value="1"/>
</dbReference>
<dbReference type="PRINTS" id="PR00328">
    <property type="entry name" value="SAR1GTPBP"/>
</dbReference>
<dbReference type="SMART" id="SM00177">
    <property type="entry name" value="ARF"/>
    <property type="match status" value="1"/>
</dbReference>
<dbReference type="SMART" id="SM00175">
    <property type="entry name" value="RAB"/>
    <property type="match status" value="1"/>
</dbReference>
<dbReference type="SMART" id="SM00178">
    <property type="entry name" value="SAR"/>
    <property type="match status" value="1"/>
</dbReference>
<dbReference type="SUPFAM" id="SSF52540">
    <property type="entry name" value="P-loop containing nucleoside triphosphate hydrolases"/>
    <property type="match status" value="1"/>
</dbReference>
<dbReference type="PROSITE" id="PS51417">
    <property type="entry name" value="ARF"/>
    <property type="match status" value="1"/>
</dbReference>
<comment type="function">
    <text evidence="2 3">Small GTP-binding protein which cycles between an inactive GDP-bound and an active GTP-bound form, and the rate of cycling is regulated by guanine nucleotide exchange factors (GEF) and GTPase-activating proteins (GAP). Required for normal cytokinesis and cilia signaling. Requires assistance from GTPase-activating proteins (GAPs) like RP2 and PDE6D, in order to cycle between inactive GDP-bound and active GTP-bound forms. Required for targeting proteins to the cilium, including myristoylated NPHP3 and prenylated INPP5E. Targets NPHP3 to the ciliary membrane by releasing myristoylated NPHP3 from UNC119B cargo adapter into the cilium (By similarity). Required for PKD1:PKD2 complex targeting from the trans-Golgi network to the cilium (By similarity).</text>
</comment>
<comment type="subunit">
    <text evidence="2 3">Found in a complex with ARL3, RP2 and UNC119 (or UNC119B); RP2 induces hydrolysis of GTP ARL3 in the complex, leading to the release of UNC119 (or UNC119B). Interacts with RP2; interaction is direct and stimulated with the activated GTP-bound form of ARL3. Interacts with SYS1. Interacts with ARL2BP; the GTP-bound form interacts with ARL2BP. Microtubule-associated protein. Does not interact with TBCC (By similarity). Interacts with RP2. Interacts with PDE6D; the interaction occurs specifically with the GTP-bound form of ARL3. Interacts with GGA1; the interaction recruits PKD1:PKD2 complex to trans-Golgi network and is required for ciliary targeting of PKD1:PKD2 complex (By similarity). Interacts with DNAAF9 (By similarity).</text>
</comment>
<comment type="subcellular location">
    <subcellularLocation>
        <location evidence="1">Golgi apparatus membrane</location>
        <topology evidence="1">Peripheral membrane protein</topology>
        <orientation evidence="1">Cytoplasmic side</orientation>
    </subcellularLocation>
    <subcellularLocation>
        <location evidence="1">Cytoplasm</location>
        <location evidence="1">Cytoskeleton</location>
        <location evidence="1">Spindle</location>
    </subcellularLocation>
    <subcellularLocation>
        <location evidence="1">Nucleus</location>
    </subcellularLocation>
    <subcellularLocation>
        <location evidence="1">Cytoplasm</location>
        <location evidence="1">Cytoskeleton</location>
        <location evidence="1">Microtubule organizing center</location>
        <location evidence="1">Centrosome</location>
    </subcellularLocation>
    <subcellularLocation>
        <location evidence="1">Cytoplasm</location>
    </subcellularLocation>
    <subcellularLocation>
        <location evidence="2">Cell projection</location>
        <location evidence="2">Cilium</location>
    </subcellularLocation>
    <text evidence="1">Detected predominantly in the photoreceptor connecting cilium. Present on the mitotic spindle. Centrosome- associated throughout the cell cycle. Not detected to interphase microtubules (By similarity).</text>
</comment>
<comment type="similarity">
    <text evidence="5">Belongs to the small GTPase superfamily. Arf family.</text>
</comment>
<gene>
    <name type="primary">ARL3</name>
</gene>
<reference key="1">
    <citation type="submission" date="2005-11" db="EMBL/GenBank/DDBJ databases">
        <authorList>
            <consortium name="NIH - Mammalian Gene Collection (MGC) project"/>
        </authorList>
    </citation>
    <scope>NUCLEOTIDE SEQUENCE [LARGE SCALE MRNA]</scope>
    <source>
        <strain>Crossbred X Angus</strain>
        <tissue>Liver</tissue>
    </source>
</reference>
<sequence>MGLLSILRKLKSAPDQEVRILLLGLDNAGKTTLLKQLASEDISHITPTQGFNIKSVQSQGFKLNVWDIGGQRKIRPYWRNYFENTDILIYVIDSADRKRFEETGQELAELLEEEKLSCVPVLIFANKQDLLTAAPASEIAEGLNLHTIRDRFWQIQSCSALTGEGVQDGMNWVCKNVSAKKK</sequence>